<sequence>MICYPIIMNNQLKFSYKYPSLEPGILIKRYKRFLADIELKSGGIITAHCPNTGPMTGVSTPGSNVMVSYSNNPKRKLAYTWELIEVTDNEPTWVGINTALPNRVIKLALAENLFPELGDYYEVKTEVVYGKDRKSRVDFKLISETKNIYLEVKNTTWADGRVALFPDTVTKRGQKHLRELIGVVEQGERAVCLFLINRGDCYQFAPGDVADHDYGKLLREAMIKGVEILPCRFIVTPQEINYLGIAEFIN</sequence>
<comment type="similarity">
    <text evidence="1">Belongs to the SfsA family.</text>
</comment>
<dbReference type="EMBL" id="CP000393">
    <property type="protein sequence ID" value="ABG51910.1"/>
    <property type="molecule type" value="Genomic_DNA"/>
</dbReference>
<dbReference type="RefSeq" id="WP_011612272.1">
    <property type="nucleotide sequence ID" value="NC_008312.1"/>
</dbReference>
<dbReference type="SMR" id="Q111B4"/>
<dbReference type="STRING" id="203124.Tery_2725"/>
<dbReference type="KEGG" id="ter:Tery_2725"/>
<dbReference type="eggNOG" id="COG1489">
    <property type="taxonomic scope" value="Bacteria"/>
</dbReference>
<dbReference type="HOGENOM" id="CLU_052299_2_0_3"/>
<dbReference type="OrthoDB" id="9802365at2"/>
<dbReference type="GO" id="GO:0003677">
    <property type="term" value="F:DNA binding"/>
    <property type="evidence" value="ECO:0007669"/>
    <property type="project" value="InterPro"/>
</dbReference>
<dbReference type="CDD" id="cd22359">
    <property type="entry name" value="SfsA-like_bacterial"/>
    <property type="match status" value="1"/>
</dbReference>
<dbReference type="Gene3D" id="2.40.50.580">
    <property type="match status" value="1"/>
</dbReference>
<dbReference type="Gene3D" id="3.40.1350.60">
    <property type="match status" value="1"/>
</dbReference>
<dbReference type="HAMAP" id="MF_00095">
    <property type="entry name" value="SfsA"/>
    <property type="match status" value="1"/>
</dbReference>
<dbReference type="InterPro" id="IPR005224">
    <property type="entry name" value="SfsA"/>
</dbReference>
<dbReference type="InterPro" id="IPR040452">
    <property type="entry name" value="SfsA_C"/>
</dbReference>
<dbReference type="InterPro" id="IPR041465">
    <property type="entry name" value="SfsA_N"/>
</dbReference>
<dbReference type="NCBIfam" id="TIGR00230">
    <property type="entry name" value="sfsA"/>
    <property type="match status" value="1"/>
</dbReference>
<dbReference type="PANTHER" id="PTHR30545">
    <property type="entry name" value="SUGAR FERMENTATION STIMULATION PROTEIN A"/>
    <property type="match status" value="1"/>
</dbReference>
<dbReference type="PANTHER" id="PTHR30545:SF2">
    <property type="entry name" value="SUGAR FERMENTATION STIMULATION PROTEIN A"/>
    <property type="match status" value="1"/>
</dbReference>
<dbReference type="Pfam" id="PF03749">
    <property type="entry name" value="SfsA"/>
    <property type="match status" value="1"/>
</dbReference>
<dbReference type="Pfam" id="PF17746">
    <property type="entry name" value="SfsA_N"/>
    <property type="match status" value="1"/>
</dbReference>
<name>SFSA_TRIEI</name>
<accession>Q111B4</accession>
<evidence type="ECO:0000255" key="1">
    <source>
        <dbReference type="HAMAP-Rule" id="MF_00095"/>
    </source>
</evidence>
<organism>
    <name type="scientific">Trichodesmium erythraeum (strain IMS101)</name>
    <dbReference type="NCBI Taxonomy" id="203124"/>
    <lineage>
        <taxon>Bacteria</taxon>
        <taxon>Bacillati</taxon>
        <taxon>Cyanobacteriota</taxon>
        <taxon>Cyanophyceae</taxon>
        <taxon>Oscillatoriophycideae</taxon>
        <taxon>Oscillatoriales</taxon>
        <taxon>Microcoleaceae</taxon>
        <taxon>Trichodesmium</taxon>
    </lineage>
</organism>
<proteinExistence type="inferred from homology"/>
<reference key="1">
    <citation type="journal article" date="2015" name="Proc. Natl. Acad. Sci. U.S.A.">
        <title>Trichodesmium genome maintains abundant, widespread noncoding DNA in situ, despite oligotrophic lifestyle.</title>
        <authorList>
            <person name="Walworth N."/>
            <person name="Pfreundt U."/>
            <person name="Nelson W.C."/>
            <person name="Mincer T."/>
            <person name="Heidelberg J.F."/>
            <person name="Fu F."/>
            <person name="Waterbury J.B."/>
            <person name="Glavina del Rio T."/>
            <person name="Goodwin L."/>
            <person name="Kyrpides N.C."/>
            <person name="Land M.L."/>
            <person name="Woyke T."/>
            <person name="Hutchins D.A."/>
            <person name="Hess W.R."/>
            <person name="Webb E.A."/>
        </authorList>
    </citation>
    <scope>NUCLEOTIDE SEQUENCE [LARGE SCALE GENOMIC DNA]</scope>
    <source>
        <strain>IMS101</strain>
    </source>
</reference>
<feature type="chain" id="PRO_0000340161" description="Sugar fermentation stimulation protein homolog">
    <location>
        <begin position="1"/>
        <end position="250"/>
    </location>
</feature>
<protein>
    <recommendedName>
        <fullName evidence="1">Sugar fermentation stimulation protein homolog</fullName>
    </recommendedName>
</protein>
<gene>
    <name evidence="1" type="primary">sfsA</name>
    <name type="ordered locus">Tery_2725</name>
</gene>